<comment type="function">
    <text evidence="1">Catalyzes the attachment of tyrosine to tRNA(Tyr) in a two-step reaction: tyrosine is first activated by ATP to form Tyr-AMP and then transferred to the acceptor end of tRNA(Tyr).</text>
</comment>
<comment type="catalytic activity">
    <reaction evidence="1">
        <text>tRNA(Tyr) + L-tyrosine + ATP = L-tyrosyl-tRNA(Tyr) + AMP + diphosphate + H(+)</text>
        <dbReference type="Rhea" id="RHEA:10220"/>
        <dbReference type="Rhea" id="RHEA-COMP:9706"/>
        <dbReference type="Rhea" id="RHEA-COMP:9707"/>
        <dbReference type="ChEBI" id="CHEBI:15378"/>
        <dbReference type="ChEBI" id="CHEBI:30616"/>
        <dbReference type="ChEBI" id="CHEBI:33019"/>
        <dbReference type="ChEBI" id="CHEBI:58315"/>
        <dbReference type="ChEBI" id="CHEBI:78442"/>
        <dbReference type="ChEBI" id="CHEBI:78536"/>
        <dbReference type="ChEBI" id="CHEBI:456215"/>
        <dbReference type="EC" id="6.1.1.1"/>
    </reaction>
</comment>
<comment type="subunit">
    <text evidence="1">Homodimer.</text>
</comment>
<comment type="subcellular location">
    <subcellularLocation>
        <location evidence="1">Cytoplasm</location>
    </subcellularLocation>
</comment>
<comment type="similarity">
    <text evidence="1">Belongs to the class-I aminoacyl-tRNA synthetase family. TyrS type 1 subfamily.</text>
</comment>
<accession>B1XFU9</accession>
<protein>
    <recommendedName>
        <fullName evidence="1">Tyrosine--tRNA ligase</fullName>
        <ecNumber evidence="1">6.1.1.1</ecNumber>
    </recommendedName>
    <alternativeName>
        <fullName evidence="1">Tyrosyl-tRNA synthetase</fullName>
        <shortName evidence="1">TyrRS</shortName>
    </alternativeName>
</protein>
<reference key="1">
    <citation type="journal article" date="2008" name="J. Bacteriol.">
        <title>The complete genome sequence of Escherichia coli DH10B: insights into the biology of a laboratory workhorse.</title>
        <authorList>
            <person name="Durfee T."/>
            <person name="Nelson R."/>
            <person name="Baldwin S."/>
            <person name="Plunkett G. III"/>
            <person name="Burland V."/>
            <person name="Mau B."/>
            <person name="Petrosino J.F."/>
            <person name="Qin X."/>
            <person name="Muzny D.M."/>
            <person name="Ayele M."/>
            <person name="Gibbs R.A."/>
            <person name="Csorgo B."/>
            <person name="Posfai G."/>
            <person name="Weinstock G.M."/>
            <person name="Blattner F.R."/>
        </authorList>
    </citation>
    <scope>NUCLEOTIDE SEQUENCE [LARGE SCALE GENOMIC DNA]</scope>
    <source>
        <strain>K12 / DH10B</strain>
    </source>
</reference>
<organism>
    <name type="scientific">Escherichia coli (strain K12 / DH10B)</name>
    <dbReference type="NCBI Taxonomy" id="316385"/>
    <lineage>
        <taxon>Bacteria</taxon>
        <taxon>Pseudomonadati</taxon>
        <taxon>Pseudomonadota</taxon>
        <taxon>Gammaproteobacteria</taxon>
        <taxon>Enterobacterales</taxon>
        <taxon>Enterobacteriaceae</taxon>
        <taxon>Escherichia</taxon>
    </lineage>
</organism>
<keyword id="KW-0007">Acetylation</keyword>
<keyword id="KW-0030">Aminoacyl-tRNA synthetase</keyword>
<keyword id="KW-0067">ATP-binding</keyword>
<keyword id="KW-0963">Cytoplasm</keyword>
<keyword id="KW-0436">Ligase</keyword>
<keyword id="KW-0547">Nucleotide-binding</keyword>
<keyword id="KW-0648">Protein biosynthesis</keyword>
<keyword id="KW-0694">RNA-binding</keyword>
<gene>
    <name evidence="1" type="primary">tyrS</name>
    <name type="ordered locus">ECDH10B_1771</name>
</gene>
<proteinExistence type="inferred from homology"/>
<dbReference type="EC" id="6.1.1.1" evidence="1"/>
<dbReference type="EMBL" id="CP000948">
    <property type="protein sequence ID" value="ACB02843.1"/>
    <property type="molecule type" value="Genomic_DNA"/>
</dbReference>
<dbReference type="RefSeq" id="WP_001295400.1">
    <property type="nucleotide sequence ID" value="NC_010473.1"/>
</dbReference>
<dbReference type="SMR" id="B1XFU9"/>
<dbReference type="GeneID" id="93775791"/>
<dbReference type="KEGG" id="ecd:ECDH10B_1771"/>
<dbReference type="HOGENOM" id="CLU_024003_0_3_6"/>
<dbReference type="GO" id="GO:0005829">
    <property type="term" value="C:cytosol"/>
    <property type="evidence" value="ECO:0007669"/>
    <property type="project" value="TreeGrafter"/>
</dbReference>
<dbReference type="GO" id="GO:0005524">
    <property type="term" value="F:ATP binding"/>
    <property type="evidence" value="ECO:0007669"/>
    <property type="project" value="UniProtKB-UniRule"/>
</dbReference>
<dbReference type="GO" id="GO:0003723">
    <property type="term" value="F:RNA binding"/>
    <property type="evidence" value="ECO:0007669"/>
    <property type="project" value="UniProtKB-KW"/>
</dbReference>
<dbReference type="GO" id="GO:0004831">
    <property type="term" value="F:tyrosine-tRNA ligase activity"/>
    <property type="evidence" value="ECO:0007669"/>
    <property type="project" value="UniProtKB-UniRule"/>
</dbReference>
<dbReference type="GO" id="GO:0006437">
    <property type="term" value="P:tyrosyl-tRNA aminoacylation"/>
    <property type="evidence" value="ECO:0007669"/>
    <property type="project" value="UniProtKB-UniRule"/>
</dbReference>
<dbReference type="CDD" id="cd00165">
    <property type="entry name" value="S4"/>
    <property type="match status" value="1"/>
</dbReference>
<dbReference type="CDD" id="cd00805">
    <property type="entry name" value="TyrRS_core"/>
    <property type="match status" value="1"/>
</dbReference>
<dbReference type="FunFam" id="1.10.240.10:FF:000001">
    <property type="entry name" value="Tyrosine--tRNA ligase"/>
    <property type="match status" value="1"/>
</dbReference>
<dbReference type="FunFam" id="3.10.290.10:FF:000007">
    <property type="entry name" value="Tyrosine--tRNA ligase"/>
    <property type="match status" value="1"/>
</dbReference>
<dbReference type="FunFam" id="3.40.50.620:FF:000008">
    <property type="entry name" value="Tyrosine--tRNA ligase"/>
    <property type="match status" value="1"/>
</dbReference>
<dbReference type="Gene3D" id="3.40.50.620">
    <property type="entry name" value="HUPs"/>
    <property type="match status" value="1"/>
</dbReference>
<dbReference type="Gene3D" id="3.10.290.10">
    <property type="entry name" value="RNA-binding S4 domain"/>
    <property type="match status" value="1"/>
</dbReference>
<dbReference type="Gene3D" id="1.10.240.10">
    <property type="entry name" value="Tyrosyl-Transfer RNA Synthetase"/>
    <property type="match status" value="1"/>
</dbReference>
<dbReference type="HAMAP" id="MF_02006">
    <property type="entry name" value="Tyr_tRNA_synth_type1"/>
    <property type="match status" value="1"/>
</dbReference>
<dbReference type="InterPro" id="IPR001412">
    <property type="entry name" value="aa-tRNA-synth_I_CS"/>
</dbReference>
<dbReference type="InterPro" id="IPR002305">
    <property type="entry name" value="aa-tRNA-synth_Ic"/>
</dbReference>
<dbReference type="InterPro" id="IPR014729">
    <property type="entry name" value="Rossmann-like_a/b/a_fold"/>
</dbReference>
<dbReference type="InterPro" id="IPR002942">
    <property type="entry name" value="S4_RNA-bd"/>
</dbReference>
<dbReference type="InterPro" id="IPR036986">
    <property type="entry name" value="S4_RNA-bd_sf"/>
</dbReference>
<dbReference type="InterPro" id="IPR054608">
    <property type="entry name" value="SYY-like_C"/>
</dbReference>
<dbReference type="InterPro" id="IPR002307">
    <property type="entry name" value="Tyr-tRNA-ligase"/>
</dbReference>
<dbReference type="InterPro" id="IPR024088">
    <property type="entry name" value="Tyr-tRNA-ligase_bac-type"/>
</dbReference>
<dbReference type="InterPro" id="IPR024107">
    <property type="entry name" value="Tyr-tRNA-ligase_bac_1"/>
</dbReference>
<dbReference type="NCBIfam" id="TIGR00234">
    <property type="entry name" value="tyrS"/>
    <property type="match status" value="1"/>
</dbReference>
<dbReference type="PANTHER" id="PTHR11766:SF0">
    <property type="entry name" value="TYROSINE--TRNA LIGASE, MITOCHONDRIAL"/>
    <property type="match status" value="1"/>
</dbReference>
<dbReference type="PANTHER" id="PTHR11766">
    <property type="entry name" value="TYROSYL-TRNA SYNTHETASE"/>
    <property type="match status" value="1"/>
</dbReference>
<dbReference type="Pfam" id="PF22421">
    <property type="entry name" value="SYY_C-terminal"/>
    <property type="match status" value="1"/>
</dbReference>
<dbReference type="Pfam" id="PF00579">
    <property type="entry name" value="tRNA-synt_1b"/>
    <property type="match status" value="1"/>
</dbReference>
<dbReference type="PRINTS" id="PR01040">
    <property type="entry name" value="TRNASYNTHTYR"/>
</dbReference>
<dbReference type="SMART" id="SM00363">
    <property type="entry name" value="S4"/>
    <property type="match status" value="1"/>
</dbReference>
<dbReference type="SUPFAM" id="SSF55174">
    <property type="entry name" value="Alpha-L RNA-binding motif"/>
    <property type="match status" value="1"/>
</dbReference>
<dbReference type="SUPFAM" id="SSF52374">
    <property type="entry name" value="Nucleotidylyl transferase"/>
    <property type="match status" value="1"/>
</dbReference>
<dbReference type="PROSITE" id="PS00178">
    <property type="entry name" value="AA_TRNA_LIGASE_I"/>
    <property type="match status" value="1"/>
</dbReference>
<dbReference type="PROSITE" id="PS50889">
    <property type="entry name" value="S4"/>
    <property type="match status" value="1"/>
</dbReference>
<feature type="chain" id="PRO_1000189294" description="Tyrosine--tRNA ligase">
    <location>
        <begin position="1"/>
        <end position="424"/>
    </location>
</feature>
<feature type="domain" description="S4 RNA-binding" evidence="1">
    <location>
        <begin position="357"/>
        <end position="414"/>
    </location>
</feature>
<feature type="short sequence motif" description="'HIGH' region">
    <location>
        <begin position="42"/>
        <end position="51"/>
    </location>
</feature>
<feature type="short sequence motif" description="'KMSKS' region">
    <location>
        <begin position="235"/>
        <end position="239"/>
    </location>
</feature>
<feature type="binding site" evidence="1">
    <location>
        <position position="37"/>
    </location>
    <ligand>
        <name>L-tyrosine</name>
        <dbReference type="ChEBI" id="CHEBI:58315"/>
    </ligand>
</feature>
<feature type="binding site" evidence="1">
    <location>
        <position position="175"/>
    </location>
    <ligand>
        <name>L-tyrosine</name>
        <dbReference type="ChEBI" id="CHEBI:58315"/>
    </ligand>
</feature>
<feature type="binding site" evidence="1">
    <location>
        <position position="179"/>
    </location>
    <ligand>
        <name>L-tyrosine</name>
        <dbReference type="ChEBI" id="CHEBI:58315"/>
    </ligand>
</feature>
<feature type="binding site" evidence="1">
    <location>
        <position position="238"/>
    </location>
    <ligand>
        <name>ATP</name>
        <dbReference type="ChEBI" id="CHEBI:30616"/>
    </ligand>
</feature>
<feature type="modified residue" description="N6-acetyllysine" evidence="1">
    <location>
        <position position="144"/>
    </location>
</feature>
<evidence type="ECO:0000255" key="1">
    <source>
        <dbReference type="HAMAP-Rule" id="MF_02006"/>
    </source>
</evidence>
<name>SYY_ECODH</name>
<sequence length="424" mass="47527">MASSNLIKQLQERGLVAQVTDEEALAERLAQGPIALYCGFDPTADSLHLGHLVPLLCLKRFQQAGHKPVALVGGATGLIGDPSFKAAERKLNTEETVQEWVDKIRKQVAPFLDFDCGENSAIAANNYDWFGNMNVLTFLRDIGKHFSVNQMINKEAVKQRLNREDQGISFTEFSYNLLQGYDFACLNKQYGVVLQIGGSDQWGNITSGIDLTRRLHQNQVFGLTVPLITKADGTKFGKTEGGAVWLDPKKTSPYKFYQFWINTADADVYRFLKFFTFMSIEEINALEEEDKNSGKAPRAQYVLAEQVTRLVHGEEGLQAAKRITECLFSGSLSALSEADFEQLAQDGVPMVEMEKGADLMQALVDSELQPSRGQARKTIASNAITINGEKQSDPEYFFKEEDRLFGRFTLLRRGKKNYCLICWK</sequence>